<protein>
    <recommendedName>
        <fullName evidence="2">Small ribosomal subunit protein uS14</fullName>
    </recommendedName>
    <alternativeName>
        <fullName>40S ribosomal protein S29</fullName>
    </alternativeName>
</protein>
<evidence type="ECO:0000255" key="1"/>
<evidence type="ECO:0000305" key="2"/>
<comment type="cofactor">
    <cofactor evidence="2">
        <name>Zn(2+)</name>
        <dbReference type="ChEBI" id="CHEBI:29105"/>
    </cofactor>
    <text evidence="2">Binds 1 zinc ion per subunit.</text>
</comment>
<comment type="similarity">
    <text evidence="2">Belongs to the universal ribosomal protein uS14 family.</text>
</comment>
<dbReference type="EMBL" id="AF517851">
    <property type="protein sequence ID" value="AAP80692.1"/>
    <property type="molecule type" value="mRNA"/>
</dbReference>
<dbReference type="SMR" id="Q7XYB0"/>
<dbReference type="GO" id="GO:0022627">
    <property type="term" value="C:cytosolic small ribosomal subunit"/>
    <property type="evidence" value="ECO:0007669"/>
    <property type="project" value="TreeGrafter"/>
</dbReference>
<dbReference type="GO" id="GO:0003735">
    <property type="term" value="F:structural constituent of ribosome"/>
    <property type="evidence" value="ECO:0007669"/>
    <property type="project" value="InterPro"/>
</dbReference>
<dbReference type="GO" id="GO:0008270">
    <property type="term" value="F:zinc ion binding"/>
    <property type="evidence" value="ECO:0007669"/>
    <property type="project" value="InterPro"/>
</dbReference>
<dbReference type="GO" id="GO:0002181">
    <property type="term" value="P:cytoplasmic translation"/>
    <property type="evidence" value="ECO:0007669"/>
    <property type="project" value="TreeGrafter"/>
</dbReference>
<dbReference type="FunFam" id="4.10.830.10:FF:000002">
    <property type="entry name" value="40S ribosomal protein S29"/>
    <property type="match status" value="1"/>
</dbReference>
<dbReference type="Gene3D" id="4.10.830.10">
    <property type="entry name" value="30s Ribosomal Protein S14, Chain N"/>
    <property type="match status" value="1"/>
</dbReference>
<dbReference type="InterPro" id="IPR001209">
    <property type="entry name" value="Ribosomal_uS14"/>
</dbReference>
<dbReference type="InterPro" id="IPR039744">
    <property type="entry name" value="RIbosomal_uS14_euk_arc"/>
</dbReference>
<dbReference type="InterPro" id="IPR043140">
    <property type="entry name" value="Ribosomal_uS14_sf"/>
</dbReference>
<dbReference type="NCBIfam" id="NF004424">
    <property type="entry name" value="PRK05766.1"/>
    <property type="match status" value="1"/>
</dbReference>
<dbReference type="PANTHER" id="PTHR12010">
    <property type="entry name" value="40S RIBOSOMAL PROTEIN S29"/>
    <property type="match status" value="1"/>
</dbReference>
<dbReference type="PANTHER" id="PTHR12010:SF2">
    <property type="entry name" value="40S RIBOSOMAL PROTEIN S29"/>
    <property type="match status" value="1"/>
</dbReference>
<dbReference type="Pfam" id="PF00253">
    <property type="entry name" value="Ribosomal_S14"/>
    <property type="match status" value="1"/>
</dbReference>
<dbReference type="SUPFAM" id="SSF57716">
    <property type="entry name" value="Glucocorticoid receptor-like (DNA-binding domain)"/>
    <property type="match status" value="1"/>
</dbReference>
<gene>
    <name type="primary">RPS29</name>
</gene>
<reference key="1">
    <citation type="submission" date="2002-06" db="EMBL/GenBank/DDBJ databases">
        <title>Gj569 Griffithsia japonica ribosome protein S29 gene.</title>
        <authorList>
            <person name="Liu C.L."/>
            <person name="Lee Y.K."/>
            <person name="Lee H.K."/>
        </authorList>
    </citation>
    <scope>NUCLEOTIDE SEQUENCE [MRNA]</scope>
    <source>
        <strain>Gj569</strain>
    </source>
</reference>
<organism>
    <name type="scientific">Griffithsia japonica</name>
    <name type="common">Red alga</name>
    <dbReference type="NCBI Taxonomy" id="83288"/>
    <lineage>
        <taxon>Eukaryota</taxon>
        <taxon>Rhodophyta</taxon>
        <taxon>Florideophyceae</taxon>
        <taxon>Rhodymeniophycidae</taxon>
        <taxon>Ceramiales</taxon>
        <taxon>Ceramiaceae</taxon>
        <taxon>Griffithsia</taxon>
    </lineage>
</organism>
<proteinExistence type="inferred from homology"/>
<accession>Q7XYB0</accession>
<sequence>MGHQNIWYSHPRKYGKGSRSCKICGNKHGLIRKYSMNICRQCFREYAKDIGFIKYR</sequence>
<name>RS29_GRIJA</name>
<feature type="chain" id="PRO_0000131028" description="Small ribosomal subunit protein uS14">
    <location>
        <begin position="1"/>
        <end position="56"/>
    </location>
</feature>
<feature type="binding site" evidence="1">
    <location>
        <position position="21"/>
    </location>
    <ligand>
        <name>Zn(2+)</name>
        <dbReference type="ChEBI" id="CHEBI:29105"/>
    </ligand>
</feature>
<feature type="binding site" evidence="1">
    <location>
        <position position="24"/>
    </location>
    <ligand>
        <name>Zn(2+)</name>
        <dbReference type="ChEBI" id="CHEBI:29105"/>
    </ligand>
</feature>
<feature type="binding site" evidence="1">
    <location>
        <position position="39"/>
    </location>
    <ligand>
        <name>Zn(2+)</name>
        <dbReference type="ChEBI" id="CHEBI:29105"/>
    </ligand>
</feature>
<feature type="binding site" evidence="1">
    <location>
        <position position="42"/>
    </location>
    <ligand>
        <name>Zn(2+)</name>
        <dbReference type="ChEBI" id="CHEBI:29105"/>
    </ligand>
</feature>
<keyword id="KW-0479">Metal-binding</keyword>
<keyword id="KW-0687">Ribonucleoprotein</keyword>
<keyword id="KW-0689">Ribosomal protein</keyword>
<keyword id="KW-0862">Zinc</keyword>